<evidence type="ECO:0000255" key="1">
    <source>
        <dbReference type="HAMAP-Rule" id="MF_00276"/>
    </source>
</evidence>
<proteinExistence type="inferred from homology"/>
<protein>
    <recommendedName>
        <fullName evidence="1">Potassium-transporting ATPase KdpC subunit</fullName>
    </recommendedName>
    <alternativeName>
        <fullName evidence="1">ATP phosphohydrolase [potassium-transporting] C chain</fullName>
    </alternativeName>
    <alternativeName>
        <fullName evidence="1">Potassium-binding and translocating subunit C</fullName>
    </alternativeName>
    <alternativeName>
        <fullName evidence="1">Potassium-translocating ATPase C chain</fullName>
    </alternativeName>
</protein>
<feature type="chain" id="PRO_0000196996" description="Potassium-transporting ATPase KdpC subunit">
    <location>
        <begin position="1"/>
        <end position="190"/>
    </location>
</feature>
<feature type="transmembrane region" description="Helical" evidence="1">
    <location>
        <begin position="13"/>
        <end position="33"/>
    </location>
</feature>
<sequence length="190" mass="20792">MKRFMQIWKPAVIGFLLLTLVCGVLYPGVVTVFAGVAFHDKANGSIIEEKLADGTTGKVGSAEIGQTFTEPEYLIGRAASDGVATNLNPTSEEQKQLVEKRIAWWHKLDPTNNRVIPMDLVTASASGVDPDISEAAAAYQVDRISRERGISTKEVKEIIAEHTSNRLLGFWGEPTVNVLQVNLALDRLKM</sequence>
<dbReference type="EMBL" id="AL591984">
    <property type="protein sequence ID" value="CAD00893.1"/>
    <property type="molecule type" value="Genomic_DNA"/>
</dbReference>
<dbReference type="PIR" id="AG1409">
    <property type="entry name" value="AG1409"/>
</dbReference>
<dbReference type="RefSeq" id="NP_466202.1">
    <property type="nucleotide sequence ID" value="NC_003210.1"/>
</dbReference>
<dbReference type="RefSeq" id="WP_003733061.1">
    <property type="nucleotide sequence ID" value="NZ_CP149495.1"/>
</dbReference>
<dbReference type="SMR" id="Q8Y3Z8"/>
<dbReference type="STRING" id="169963.gene:17595397"/>
<dbReference type="PaxDb" id="169963-lmo2680"/>
<dbReference type="EnsemblBacteria" id="CAD00893">
    <property type="protein sequence ID" value="CAD00893"/>
    <property type="gene ID" value="CAD00893"/>
</dbReference>
<dbReference type="GeneID" id="987150"/>
<dbReference type="KEGG" id="lmo:lmo2680"/>
<dbReference type="PATRIC" id="fig|169963.11.peg.2746"/>
<dbReference type="eggNOG" id="COG2156">
    <property type="taxonomic scope" value="Bacteria"/>
</dbReference>
<dbReference type="HOGENOM" id="CLU_077094_2_0_9"/>
<dbReference type="OrthoDB" id="9809491at2"/>
<dbReference type="PhylomeDB" id="Q8Y3Z8"/>
<dbReference type="BioCyc" id="LMON169963:LMO2680-MONOMER"/>
<dbReference type="Proteomes" id="UP000000817">
    <property type="component" value="Chromosome"/>
</dbReference>
<dbReference type="GO" id="GO:0005886">
    <property type="term" value="C:plasma membrane"/>
    <property type="evidence" value="ECO:0007669"/>
    <property type="project" value="UniProtKB-SubCell"/>
</dbReference>
<dbReference type="GO" id="GO:0005524">
    <property type="term" value="F:ATP binding"/>
    <property type="evidence" value="ECO:0007669"/>
    <property type="project" value="UniProtKB-UniRule"/>
</dbReference>
<dbReference type="GO" id="GO:0008556">
    <property type="term" value="F:P-type potassium transmembrane transporter activity"/>
    <property type="evidence" value="ECO:0000318"/>
    <property type="project" value="GO_Central"/>
</dbReference>
<dbReference type="GO" id="GO:0071805">
    <property type="term" value="P:potassium ion transmembrane transport"/>
    <property type="evidence" value="ECO:0000318"/>
    <property type="project" value="GO_Central"/>
</dbReference>
<dbReference type="HAMAP" id="MF_00276">
    <property type="entry name" value="KdpC"/>
    <property type="match status" value="1"/>
</dbReference>
<dbReference type="InterPro" id="IPR003820">
    <property type="entry name" value="KdpC"/>
</dbReference>
<dbReference type="NCBIfam" id="TIGR00681">
    <property type="entry name" value="kdpC"/>
    <property type="match status" value="1"/>
</dbReference>
<dbReference type="PANTHER" id="PTHR30042">
    <property type="entry name" value="POTASSIUM-TRANSPORTING ATPASE C CHAIN"/>
    <property type="match status" value="1"/>
</dbReference>
<dbReference type="PANTHER" id="PTHR30042:SF2">
    <property type="entry name" value="POTASSIUM-TRANSPORTING ATPASE KDPC SUBUNIT"/>
    <property type="match status" value="1"/>
</dbReference>
<dbReference type="Pfam" id="PF02669">
    <property type="entry name" value="KdpC"/>
    <property type="match status" value="1"/>
</dbReference>
<dbReference type="PIRSF" id="PIRSF001296">
    <property type="entry name" value="K_ATPase_KdpC"/>
    <property type="match status" value="1"/>
</dbReference>
<comment type="function">
    <text evidence="1">Part of the high-affinity ATP-driven potassium transport (or Kdp) system, which catalyzes the hydrolysis of ATP coupled with the electrogenic transport of potassium into the cytoplasm. This subunit acts as a catalytic chaperone that increases the ATP-binding affinity of the ATP-hydrolyzing subunit KdpB by the formation of a transient KdpB/KdpC/ATP ternary complex.</text>
</comment>
<comment type="subunit">
    <text evidence="1">The system is composed of three essential subunits: KdpA, KdpB and KdpC.</text>
</comment>
<comment type="subcellular location">
    <subcellularLocation>
        <location evidence="1">Cell membrane</location>
        <topology evidence="1">Single-pass membrane protein</topology>
    </subcellularLocation>
</comment>
<comment type="similarity">
    <text evidence="1">Belongs to the KdpC family.</text>
</comment>
<reference key="1">
    <citation type="journal article" date="2001" name="Science">
        <title>Comparative genomics of Listeria species.</title>
        <authorList>
            <person name="Glaser P."/>
            <person name="Frangeul L."/>
            <person name="Buchrieser C."/>
            <person name="Rusniok C."/>
            <person name="Amend A."/>
            <person name="Baquero F."/>
            <person name="Berche P."/>
            <person name="Bloecker H."/>
            <person name="Brandt P."/>
            <person name="Chakraborty T."/>
            <person name="Charbit A."/>
            <person name="Chetouani F."/>
            <person name="Couve E."/>
            <person name="de Daruvar A."/>
            <person name="Dehoux P."/>
            <person name="Domann E."/>
            <person name="Dominguez-Bernal G."/>
            <person name="Duchaud E."/>
            <person name="Durant L."/>
            <person name="Dussurget O."/>
            <person name="Entian K.-D."/>
            <person name="Fsihi H."/>
            <person name="Garcia-del Portillo F."/>
            <person name="Garrido P."/>
            <person name="Gautier L."/>
            <person name="Goebel W."/>
            <person name="Gomez-Lopez N."/>
            <person name="Hain T."/>
            <person name="Hauf J."/>
            <person name="Jackson D."/>
            <person name="Jones L.-M."/>
            <person name="Kaerst U."/>
            <person name="Kreft J."/>
            <person name="Kuhn M."/>
            <person name="Kunst F."/>
            <person name="Kurapkat G."/>
            <person name="Madueno E."/>
            <person name="Maitournam A."/>
            <person name="Mata Vicente J."/>
            <person name="Ng E."/>
            <person name="Nedjari H."/>
            <person name="Nordsiek G."/>
            <person name="Novella S."/>
            <person name="de Pablos B."/>
            <person name="Perez-Diaz J.-C."/>
            <person name="Purcell R."/>
            <person name="Remmel B."/>
            <person name="Rose M."/>
            <person name="Schlueter T."/>
            <person name="Simoes N."/>
            <person name="Tierrez A."/>
            <person name="Vazquez-Boland J.-A."/>
            <person name="Voss H."/>
            <person name="Wehland J."/>
            <person name="Cossart P."/>
        </authorList>
    </citation>
    <scope>NUCLEOTIDE SEQUENCE [LARGE SCALE GENOMIC DNA]</scope>
    <source>
        <strain>ATCC BAA-679 / EGD-e</strain>
    </source>
</reference>
<organism>
    <name type="scientific">Listeria monocytogenes serovar 1/2a (strain ATCC BAA-679 / EGD-e)</name>
    <dbReference type="NCBI Taxonomy" id="169963"/>
    <lineage>
        <taxon>Bacteria</taxon>
        <taxon>Bacillati</taxon>
        <taxon>Bacillota</taxon>
        <taxon>Bacilli</taxon>
        <taxon>Bacillales</taxon>
        <taxon>Listeriaceae</taxon>
        <taxon>Listeria</taxon>
    </lineage>
</organism>
<name>KDPC_LISMO</name>
<gene>
    <name evidence="1" type="primary">kdpC</name>
    <name type="ordered locus">lmo2680</name>
</gene>
<accession>Q8Y3Z8</accession>
<keyword id="KW-0067">ATP-binding</keyword>
<keyword id="KW-1003">Cell membrane</keyword>
<keyword id="KW-0406">Ion transport</keyword>
<keyword id="KW-0472">Membrane</keyword>
<keyword id="KW-0547">Nucleotide-binding</keyword>
<keyword id="KW-0630">Potassium</keyword>
<keyword id="KW-0633">Potassium transport</keyword>
<keyword id="KW-1185">Reference proteome</keyword>
<keyword id="KW-0812">Transmembrane</keyword>
<keyword id="KW-1133">Transmembrane helix</keyword>
<keyword id="KW-0813">Transport</keyword>